<protein>
    <recommendedName>
        <fullName evidence="1">Phosphatidylserine decarboxylase proenzyme</fullName>
        <ecNumber evidence="1">4.1.1.65</ecNumber>
    </recommendedName>
    <component>
        <recommendedName>
            <fullName evidence="1">Phosphatidylserine decarboxylase alpha chain</fullName>
        </recommendedName>
    </component>
    <component>
        <recommendedName>
            <fullName evidence="1">Phosphatidylserine decarboxylase beta chain</fullName>
        </recommendedName>
    </component>
</protein>
<sequence length="280" mass="30542">MSLVTSLTYVLPHRLLSSLARALAYSQTPSTKQWLIDTVTRKFGVDLSEAQEPDPHAYPTFNAFFTRALKPGARVPDADPSAVLMPADGRISQLGPVENGRIFQAKGQSFTAAELLGDEAAAAPFNDGVFATVYLSPKDYHRVHMPWTGTLRETVHVPGRLFSVGPDAVRKVPRLFARNERLVCHFDTEFGPMASVMVGALLVSGVETVWSGVEIPRYGDRITRKDYRGKGVVLEKFAEMARFNYGSTVIVLLPPGVATLDGGLAAETSVRLGQALARRQ</sequence>
<accession>Q8PJ17</accession>
<organism>
    <name type="scientific">Xanthomonas axonopodis pv. citri (strain 306)</name>
    <dbReference type="NCBI Taxonomy" id="190486"/>
    <lineage>
        <taxon>Bacteria</taxon>
        <taxon>Pseudomonadati</taxon>
        <taxon>Pseudomonadota</taxon>
        <taxon>Gammaproteobacteria</taxon>
        <taxon>Lysobacterales</taxon>
        <taxon>Lysobacteraceae</taxon>
        <taxon>Xanthomonas</taxon>
    </lineage>
</organism>
<reference key="1">
    <citation type="journal article" date="2002" name="Nature">
        <title>Comparison of the genomes of two Xanthomonas pathogens with differing host specificities.</title>
        <authorList>
            <person name="da Silva A.C.R."/>
            <person name="Ferro J.A."/>
            <person name="Reinach F.C."/>
            <person name="Farah C.S."/>
            <person name="Furlan L.R."/>
            <person name="Quaggio R.B."/>
            <person name="Monteiro-Vitorello C.B."/>
            <person name="Van Sluys M.A."/>
            <person name="Almeida N.F. Jr."/>
            <person name="Alves L.M.C."/>
            <person name="do Amaral A.M."/>
            <person name="Bertolini M.C."/>
            <person name="Camargo L.E.A."/>
            <person name="Camarotte G."/>
            <person name="Cannavan F."/>
            <person name="Cardozo J."/>
            <person name="Chambergo F."/>
            <person name="Ciapina L.P."/>
            <person name="Cicarelli R.M.B."/>
            <person name="Coutinho L.L."/>
            <person name="Cursino-Santos J.R."/>
            <person name="El-Dorry H."/>
            <person name="Faria J.B."/>
            <person name="Ferreira A.J.S."/>
            <person name="Ferreira R.C.C."/>
            <person name="Ferro M.I.T."/>
            <person name="Formighieri E.F."/>
            <person name="Franco M.C."/>
            <person name="Greggio C.C."/>
            <person name="Gruber A."/>
            <person name="Katsuyama A.M."/>
            <person name="Kishi L.T."/>
            <person name="Leite R.P."/>
            <person name="Lemos E.G.M."/>
            <person name="Lemos M.V.F."/>
            <person name="Locali E.C."/>
            <person name="Machado M.A."/>
            <person name="Madeira A.M.B.N."/>
            <person name="Martinez-Rossi N.M."/>
            <person name="Martins E.C."/>
            <person name="Meidanis J."/>
            <person name="Menck C.F.M."/>
            <person name="Miyaki C.Y."/>
            <person name="Moon D.H."/>
            <person name="Moreira L.M."/>
            <person name="Novo M.T.M."/>
            <person name="Okura V.K."/>
            <person name="Oliveira M.C."/>
            <person name="Oliveira V.R."/>
            <person name="Pereira H.A."/>
            <person name="Rossi A."/>
            <person name="Sena J.A.D."/>
            <person name="Silva C."/>
            <person name="de Souza R.F."/>
            <person name="Spinola L.A.F."/>
            <person name="Takita M.A."/>
            <person name="Tamura R.E."/>
            <person name="Teixeira E.C."/>
            <person name="Tezza R.I.D."/>
            <person name="Trindade dos Santos M."/>
            <person name="Truffi D."/>
            <person name="Tsai S.M."/>
            <person name="White F.F."/>
            <person name="Setubal J.C."/>
            <person name="Kitajima J.P."/>
        </authorList>
    </citation>
    <scope>NUCLEOTIDE SEQUENCE [LARGE SCALE GENOMIC DNA]</scope>
    <source>
        <strain>306</strain>
    </source>
</reference>
<feature type="chain" id="PRO_0000029713" description="Phosphatidylserine decarboxylase beta chain" evidence="1">
    <location>
        <begin position="1"/>
        <end position="246"/>
    </location>
</feature>
<feature type="chain" id="PRO_0000029714" description="Phosphatidylserine decarboxylase alpha chain" evidence="1">
    <location>
        <begin position="247"/>
        <end position="280"/>
    </location>
</feature>
<feature type="active site" description="Charge relay system; for autoendoproteolytic cleavage activity" evidence="1">
    <location>
        <position position="88"/>
    </location>
</feature>
<feature type="active site" description="Charge relay system; for autoendoproteolytic cleavage activity" evidence="1">
    <location>
        <position position="144"/>
    </location>
</feature>
<feature type="active site" description="Charge relay system; for autoendoproteolytic cleavage activity" evidence="1">
    <location>
        <position position="247"/>
    </location>
</feature>
<feature type="active site" description="Schiff-base intermediate with substrate; via pyruvic acid; for decarboxylase activity" evidence="1">
    <location>
        <position position="247"/>
    </location>
</feature>
<feature type="site" description="Cleavage (non-hydrolytic); by autocatalysis" evidence="1">
    <location>
        <begin position="246"/>
        <end position="247"/>
    </location>
</feature>
<feature type="modified residue" description="Pyruvic acid (Ser); by autocatalysis" evidence="1">
    <location>
        <position position="247"/>
    </location>
</feature>
<keyword id="KW-1003">Cell membrane</keyword>
<keyword id="KW-0210">Decarboxylase</keyword>
<keyword id="KW-0444">Lipid biosynthesis</keyword>
<keyword id="KW-0443">Lipid metabolism</keyword>
<keyword id="KW-0456">Lyase</keyword>
<keyword id="KW-0472">Membrane</keyword>
<keyword id="KW-0594">Phospholipid biosynthesis</keyword>
<keyword id="KW-1208">Phospholipid metabolism</keyword>
<keyword id="KW-0670">Pyruvate</keyword>
<keyword id="KW-0865">Zymogen</keyword>
<proteinExistence type="inferred from homology"/>
<evidence type="ECO:0000255" key="1">
    <source>
        <dbReference type="HAMAP-Rule" id="MF_00662"/>
    </source>
</evidence>
<dbReference type="EC" id="4.1.1.65" evidence="1"/>
<dbReference type="EMBL" id="AE008923">
    <property type="protein sequence ID" value="AAM37573.1"/>
    <property type="molecule type" value="Genomic_DNA"/>
</dbReference>
<dbReference type="SMR" id="Q8PJ17"/>
<dbReference type="KEGG" id="xac:XAC2728"/>
<dbReference type="eggNOG" id="COG0688">
    <property type="taxonomic scope" value="Bacteria"/>
</dbReference>
<dbReference type="HOGENOM" id="CLU_029061_4_1_6"/>
<dbReference type="UniPathway" id="UPA00558">
    <property type="reaction ID" value="UER00616"/>
</dbReference>
<dbReference type="Proteomes" id="UP000000576">
    <property type="component" value="Chromosome"/>
</dbReference>
<dbReference type="GO" id="GO:0005886">
    <property type="term" value="C:plasma membrane"/>
    <property type="evidence" value="ECO:0007669"/>
    <property type="project" value="UniProtKB-SubCell"/>
</dbReference>
<dbReference type="GO" id="GO:0004609">
    <property type="term" value="F:phosphatidylserine decarboxylase activity"/>
    <property type="evidence" value="ECO:0007669"/>
    <property type="project" value="UniProtKB-UniRule"/>
</dbReference>
<dbReference type="GO" id="GO:0006646">
    <property type="term" value="P:phosphatidylethanolamine biosynthetic process"/>
    <property type="evidence" value="ECO:0007669"/>
    <property type="project" value="UniProtKB-UniRule"/>
</dbReference>
<dbReference type="HAMAP" id="MF_00662">
    <property type="entry name" value="PS_decarb_PSD_B_type1"/>
    <property type="match status" value="1"/>
</dbReference>
<dbReference type="InterPro" id="IPR003817">
    <property type="entry name" value="PS_Dcarbxylase"/>
</dbReference>
<dbReference type="InterPro" id="IPR033177">
    <property type="entry name" value="PSD-B"/>
</dbReference>
<dbReference type="InterPro" id="IPR033178">
    <property type="entry name" value="PSD_type1_pro"/>
</dbReference>
<dbReference type="NCBIfam" id="TIGR00163">
    <property type="entry name" value="PS_decarb"/>
    <property type="match status" value="1"/>
</dbReference>
<dbReference type="PANTHER" id="PTHR10067">
    <property type="entry name" value="PHOSPHATIDYLSERINE DECARBOXYLASE"/>
    <property type="match status" value="1"/>
</dbReference>
<dbReference type="PANTHER" id="PTHR10067:SF6">
    <property type="entry name" value="PHOSPHATIDYLSERINE DECARBOXYLASE PROENZYME, MITOCHONDRIAL"/>
    <property type="match status" value="1"/>
</dbReference>
<dbReference type="Pfam" id="PF02666">
    <property type="entry name" value="PS_Dcarbxylase"/>
    <property type="match status" value="1"/>
</dbReference>
<gene>
    <name evidence="1" type="primary">psd</name>
    <name type="synonym">dpsD</name>
    <name type="ordered locus">XAC2728</name>
</gene>
<comment type="function">
    <text evidence="1">Catalyzes the formation of phosphatidylethanolamine (PtdEtn) from phosphatidylserine (PtdSer).</text>
</comment>
<comment type="catalytic activity">
    <reaction evidence="1">
        <text>a 1,2-diacyl-sn-glycero-3-phospho-L-serine + H(+) = a 1,2-diacyl-sn-glycero-3-phosphoethanolamine + CO2</text>
        <dbReference type="Rhea" id="RHEA:20828"/>
        <dbReference type="ChEBI" id="CHEBI:15378"/>
        <dbReference type="ChEBI" id="CHEBI:16526"/>
        <dbReference type="ChEBI" id="CHEBI:57262"/>
        <dbReference type="ChEBI" id="CHEBI:64612"/>
        <dbReference type="EC" id="4.1.1.65"/>
    </reaction>
</comment>
<comment type="cofactor">
    <cofactor evidence="1">
        <name>pyruvate</name>
        <dbReference type="ChEBI" id="CHEBI:15361"/>
    </cofactor>
    <text evidence="1">Binds 1 pyruvoyl group covalently per subunit.</text>
</comment>
<comment type="pathway">
    <text evidence="1">Phospholipid metabolism; phosphatidylethanolamine biosynthesis; phosphatidylethanolamine from CDP-diacylglycerol: step 2/2.</text>
</comment>
<comment type="subunit">
    <text evidence="1">Heterodimer of a large membrane-associated beta subunit and a small pyruvoyl-containing alpha subunit.</text>
</comment>
<comment type="subcellular location">
    <subcellularLocation>
        <location evidence="1">Cell membrane</location>
        <topology evidence="1">Peripheral membrane protein</topology>
    </subcellularLocation>
</comment>
<comment type="PTM">
    <text evidence="1">Is synthesized initially as an inactive proenzyme. Formation of the active enzyme involves a self-maturation process in which the active site pyruvoyl group is generated from an internal serine residue via an autocatalytic post-translational modification. Two non-identical subunits are generated from the proenzyme in this reaction, and the pyruvate is formed at the N-terminus of the alpha chain, which is derived from the carboxyl end of the proenzyme. The autoendoproteolytic cleavage occurs by a canonical serine protease mechanism, in which the side chain hydroxyl group of the serine supplies its oxygen atom to form the C-terminus of the beta chain, while the remainder of the serine residue undergoes an oxidative deamination to produce ammonia and the pyruvoyl prosthetic group on the alpha chain. During this reaction, the Ser that is part of the protease active site of the proenzyme becomes the pyruvoyl prosthetic group, which constitutes an essential element of the active site of the mature decarboxylase.</text>
</comment>
<comment type="similarity">
    <text evidence="1">Belongs to the phosphatidylserine decarboxylase family. PSD-B subfamily. Prokaryotic type I sub-subfamily.</text>
</comment>
<name>PSD_XANAC</name>